<reference key="1">
    <citation type="journal article" date="2013" name="Nature">
        <title>The zebrafish reference genome sequence and its relationship to the human genome.</title>
        <authorList>
            <person name="Howe K."/>
            <person name="Clark M.D."/>
            <person name="Torroja C.F."/>
            <person name="Torrance J."/>
            <person name="Berthelot C."/>
            <person name="Muffato M."/>
            <person name="Collins J.E."/>
            <person name="Humphray S."/>
            <person name="McLaren K."/>
            <person name="Matthews L."/>
            <person name="McLaren S."/>
            <person name="Sealy I."/>
            <person name="Caccamo M."/>
            <person name="Churcher C."/>
            <person name="Scott C."/>
            <person name="Barrett J.C."/>
            <person name="Koch R."/>
            <person name="Rauch G.J."/>
            <person name="White S."/>
            <person name="Chow W."/>
            <person name="Kilian B."/>
            <person name="Quintais L.T."/>
            <person name="Guerra-Assuncao J.A."/>
            <person name="Zhou Y."/>
            <person name="Gu Y."/>
            <person name="Yen J."/>
            <person name="Vogel J.H."/>
            <person name="Eyre T."/>
            <person name="Redmond S."/>
            <person name="Banerjee R."/>
            <person name="Chi J."/>
            <person name="Fu B."/>
            <person name="Langley E."/>
            <person name="Maguire S.F."/>
            <person name="Laird G.K."/>
            <person name="Lloyd D."/>
            <person name="Kenyon E."/>
            <person name="Donaldson S."/>
            <person name="Sehra H."/>
            <person name="Almeida-King J."/>
            <person name="Loveland J."/>
            <person name="Trevanion S."/>
            <person name="Jones M."/>
            <person name="Quail M."/>
            <person name="Willey D."/>
            <person name="Hunt A."/>
            <person name="Burton J."/>
            <person name="Sims S."/>
            <person name="McLay K."/>
            <person name="Plumb B."/>
            <person name="Davis J."/>
            <person name="Clee C."/>
            <person name="Oliver K."/>
            <person name="Clark R."/>
            <person name="Riddle C."/>
            <person name="Elliot D."/>
            <person name="Threadgold G."/>
            <person name="Harden G."/>
            <person name="Ware D."/>
            <person name="Begum S."/>
            <person name="Mortimore B."/>
            <person name="Kerry G."/>
            <person name="Heath P."/>
            <person name="Phillimore B."/>
            <person name="Tracey A."/>
            <person name="Corby N."/>
            <person name="Dunn M."/>
            <person name="Johnson C."/>
            <person name="Wood J."/>
            <person name="Clark S."/>
            <person name="Pelan S."/>
            <person name="Griffiths G."/>
            <person name="Smith M."/>
            <person name="Glithero R."/>
            <person name="Howden P."/>
            <person name="Barker N."/>
            <person name="Lloyd C."/>
            <person name="Stevens C."/>
            <person name="Harley J."/>
            <person name="Holt K."/>
            <person name="Panagiotidis G."/>
            <person name="Lovell J."/>
            <person name="Beasley H."/>
            <person name="Henderson C."/>
            <person name="Gordon D."/>
            <person name="Auger K."/>
            <person name="Wright D."/>
            <person name="Collins J."/>
            <person name="Raisen C."/>
            <person name="Dyer L."/>
            <person name="Leung K."/>
            <person name="Robertson L."/>
            <person name="Ambridge K."/>
            <person name="Leongamornlert D."/>
            <person name="McGuire S."/>
            <person name="Gilderthorp R."/>
            <person name="Griffiths C."/>
            <person name="Manthravadi D."/>
            <person name="Nichol S."/>
            <person name="Barker G."/>
            <person name="Whitehead S."/>
            <person name="Kay M."/>
            <person name="Brown J."/>
            <person name="Murnane C."/>
            <person name="Gray E."/>
            <person name="Humphries M."/>
            <person name="Sycamore N."/>
            <person name="Barker D."/>
            <person name="Saunders D."/>
            <person name="Wallis J."/>
            <person name="Babbage A."/>
            <person name="Hammond S."/>
            <person name="Mashreghi-Mohammadi M."/>
            <person name="Barr L."/>
            <person name="Martin S."/>
            <person name="Wray P."/>
            <person name="Ellington A."/>
            <person name="Matthews N."/>
            <person name="Ellwood M."/>
            <person name="Woodmansey R."/>
            <person name="Clark G."/>
            <person name="Cooper J."/>
            <person name="Tromans A."/>
            <person name="Grafham D."/>
            <person name="Skuce C."/>
            <person name="Pandian R."/>
            <person name="Andrews R."/>
            <person name="Harrison E."/>
            <person name="Kimberley A."/>
            <person name="Garnett J."/>
            <person name="Fosker N."/>
            <person name="Hall R."/>
            <person name="Garner P."/>
            <person name="Kelly D."/>
            <person name="Bird C."/>
            <person name="Palmer S."/>
            <person name="Gehring I."/>
            <person name="Berger A."/>
            <person name="Dooley C.M."/>
            <person name="Ersan-Urun Z."/>
            <person name="Eser C."/>
            <person name="Geiger H."/>
            <person name="Geisler M."/>
            <person name="Karotki L."/>
            <person name="Kirn A."/>
            <person name="Konantz J."/>
            <person name="Konantz M."/>
            <person name="Oberlander M."/>
            <person name="Rudolph-Geiger S."/>
            <person name="Teucke M."/>
            <person name="Lanz C."/>
            <person name="Raddatz G."/>
            <person name="Osoegawa K."/>
            <person name="Zhu B."/>
            <person name="Rapp A."/>
            <person name="Widaa S."/>
            <person name="Langford C."/>
            <person name="Yang F."/>
            <person name="Schuster S.C."/>
            <person name="Carter N.P."/>
            <person name="Harrow J."/>
            <person name="Ning Z."/>
            <person name="Herrero J."/>
            <person name="Searle S.M."/>
            <person name="Enright A."/>
            <person name="Geisler R."/>
            <person name="Plasterk R.H."/>
            <person name="Lee C."/>
            <person name="Westerfield M."/>
            <person name="de Jong P.J."/>
            <person name="Zon L.I."/>
            <person name="Postlethwait J.H."/>
            <person name="Nusslein-Volhard C."/>
            <person name="Hubbard T.J."/>
            <person name="Roest Crollius H."/>
            <person name="Rogers J."/>
            <person name="Stemple D.L."/>
        </authorList>
    </citation>
    <scope>NUCLEOTIDE SEQUENCE [LARGE SCALE GENOMIC DNA]</scope>
    <source>
        <strain>Tuebingen</strain>
    </source>
</reference>
<reference key="2">
    <citation type="journal article" date="2009" name="Cell">
        <title>Regulation of vertebrate nervous system alternative splicing and development by an SR-related protein.</title>
        <authorList>
            <person name="Calarco J.A."/>
            <person name="Superina S."/>
            <person name="O'Hanlon D."/>
            <person name="Gabut M."/>
            <person name="Raj B."/>
            <person name="Pan Q."/>
            <person name="Skalska U."/>
            <person name="Clarke L."/>
            <person name="Gelinas D."/>
            <person name="van der Kooy D."/>
            <person name="Zhen M."/>
            <person name="Ciruna B."/>
            <person name="Blencowe B.J."/>
        </authorList>
    </citation>
    <scope>IDENTIFICATION</scope>
    <scope>FUNCTION</scope>
    <scope>DEVELOPMENTAL STAGE</scope>
</reference>
<accession>P0CB65</accession>
<sequence length="574" mass="65522">MAGVQQGEKQLFEKFWRGTFKAVATPRPESIIVASITARRAVTKLETPVGPKDDEEKVKAKDLVTKTHEKNGHIKRRGRKRHSHRRARSVSFDADLSPRPVPKTKKKKKKSQRKRRRHRSPSCSPSPVRKKKKKKSSKKRKRHRSASRKGRHSGSSSRRKRKEDKKHKKRSRSHSHRRHRHRKAEIRSSSCMENRSEDCEKSGFRDGGRSSDVHGGDACRSAVKLTNKISSKCCCHFSESTVSPSRSGVEGLSKVVIVQNSESSDGKRRADYDSGNDTSSPPSSKTGITRSKVAGNGKFSCLTSPEKLRLADGDNASDSGNSLTSYDSLGKPLLRENTLHSSVFSKLKGEESGRFCVDVEKTQPLDLISDRNRSPSHDRYEDGTRSRSRSISSQSRYSGRHSRSRSLSSGRRSYSRSSSYSLASRRDSLSSVSSCRSLNHSRCTTHRFRERKRYCSSCKSRKHSRRRPSSPMRKRRRDSPSHLEARRITSARKRPIPYYRPSPSVSSRSSSILSWRLFPLTRSRTRSRSCSRSRSRSHSHTYSSYRSYSRSSSWNSLYSRRSRSRSRSYSRARR</sequence>
<gene>
    <name type="primary">srrm4</name>
</gene>
<organism>
    <name type="scientific">Danio rerio</name>
    <name type="common">Zebrafish</name>
    <name type="synonym">Brachydanio rerio</name>
    <dbReference type="NCBI Taxonomy" id="7955"/>
    <lineage>
        <taxon>Eukaryota</taxon>
        <taxon>Metazoa</taxon>
        <taxon>Chordata</taxon>
        <taxon>Craniata</taxon>
        <taxon>Vertebrata</taxon>
        <taxon>Euteleostomi</taxon>
        <taxon>Actinopterygii</taxon>
        <taxon>Neopterygii</taxon>
        <taxon>Teleostei</taxon>
        <taxon>Ostariophysi</taxon>
        <taxon>Cypriniformes</taxon>
        <taxon>Danionidae</taxon>
        <taxon>Danioninae</taxon>
        <taxon>Danio</taxon>
    </lineage>
</organism>
<comment type="function">
    <text evidence="1 3">Splicing factor specifically required for neural cell differentiation (PubMed:19737518). Acts in conjunction with nPTB/PTBP2 by binding directly to its regulated target transcripts and promotes neural-specific exon inclusion in many genes that function in neural cell differentiation. Required to promote the inclusion of neural-specific exon 10 in nPTB/PTBP2, leading to increased expression of neural-specific nPTB/PTBP2 (By similarity).</text>
</comment>
<comment type="subcellular location">
    <subcellularLocation>
        <location evidence="1">Nucleus</location>
    </subcellularLocation>
</comment>
<comment type="developmental stage">
    <text evidence="3">At 24 hour postfertilization (hpf), significant expression is observed in the developing brain, including the tectum and telencephalon. Expression is also observed around the trigeminal ganglion, at the mid-hindbrain boundary, and throughout the hindbrain. At 36 hpf, additional expression is observed in the cerebellum and within the retina. At 48 hpf, stronger and more widespread expression is detected throughout the developing eyes brain.</text>
</comment>
<comment type="similarity">
    <text evidence="4">Belongs to the nSR100 family.</text>
</comment>
<proteinExistence type="evidence at transcript level"/>
<keyword id="KW-0221">Differentiation</keyword>
<keyword id="KW-0507">mRNA processing</keyword>
<keyword id="KW-0508">mRNA splicing</keyword>
<keyword id="KW-0539">Nucleus</keyword>
<keyword id="KW-1185">Reference proteome</keyword>
<keyword id="KW-0694">RNA-binding</keyword>
<name>SRRM4_DANRE</name>
<protein>
    <recommendedName>
        <fullName>Serine/arginine repetitive matrix protein 4</fullName>
    </recommendedName>
    <alternativeName>
        <fullName>Neural-specific serine/arginine repetitive splicing factor of 100 kDa</fullName>
        <shortName>ZnSR100</shortName>
        <shortName>nSR100</shortName>
    </alternativeName>
</protein>
<feature type="chain" id="PRO_0000390460" description="Serine/arginine repetitive matrix protein 4">
    <location>
        <begin position="1"/>
        <end position="574"/>
    </location>
</feature>
<feature type="region of interest" description="Disordered" evidence="2">
    <location>
        <begin position="45"/>
        <end position="217"/>
    </location>
</feature>
<feature type="region of interest" description="Disordered" evidence="2">
    <location>
        <begin position="257"/>
        <end position="291"/>
    </location>
</feature>
<feature type="region of interest" description="Disordered" evidence="2">
    <location>
        <begin position="366"/>
        <end position="422"/>
    </location>
</feature>
<feature type="region of interest" description="Disordered" evidence="2">
    <location>
        <begin position="454"/>
        <end position="508"/>
    </location>
</feature>
<feature type="region of interest" description="Disordered" evidence="2">
    <location>
        <begin position="526"/>
        <end position="574"/>
    </location>
</feature>
<feature type="compositionally biased region" description="Basic and acidic residues" evidence="2">
    <location>
        <begin position="51"/>
        <end position="72"/>
    </location>
</feature>
<feature type="compositionally biased region" description="Basic residues" evidence="2">
    <location>
        <begin position="73"/>
        <end position="88"/>
    </location>
</feature>
<feature type="compositionally biased region" description="Basic residues" evidence="2">
    <location>
        <begin position="102"/>
        <end position="120"/>
    </location>
</feature>
<feature type="compositionally biased region" description="Basic residues" evidence="2">
    <location>
        <begin position="128"/>
        <end position="184"/>
    </location>
</feature>
<feature type="compositionally biased region" description="Basic and acidic residues" evidence="2">
    <location>
        <begin position="194"/>
        <end position="217"/>
    </location>
</feature>
<feature type="compositionally biased region" description="Polar residues" evidence="2">
    <location>
        <begin position="275"/>
        <end position="289"/>
    </location>
</feature>
<feature type="compositionally biased region" description="Basic and acidic residues" evidence="2">
    <location>
        <begin position="366"/>
        <end position="385"/>
    </location>
</feature>
<feature type="compositionally biased region" description="Low complexity" evidence="2">
    <location>
        <begin position="405"/>
        <end position="422"/>
    </location>
</feature>
<feature type="compositionally biased region" description="Basic residues" evidence="2">
    <location>
        <begin position="454"/>
        <end position="477"/>
    </location>
</feature>
<feature type="compositionally biased region" description="Basic and acidic residues" evidence="2">
    <location>
        <begin position="478"/>
        <end position="487"/>
    </location>
</feature>
<feature type="compositionally biased region" description="Low complexity" evidence="2">
    <location>
        <begin position="496"/>
        <end position="508"/>
    </location>
</feature>
<feature type="compositionally biased region" description="Basic residues" evidence="2">
    <location>
        <begin position="526"/>
        <end position="539"/>
    </location>
</feature>
<feature type="compositionally biased region" description="Low complexity" evidence="2">
    <location>
        <begin position="540"/>
        <end position="559"/>
    </location>
</feature>
<feature type="compositionally biased region" description="Basic residues" evidence="2">
    <location>
        <begin position="560"/>
        <end position="574"/>
    </location>
</feature>
<dbReference type="EMBL" id="BX649391">
    <property type="status" value="NOT_ANNOTATED_CDS"/>
    <property type="molecule type" value="Genomic_DNA"/>
</dbReference>
<dbReference type="FunCoup" id="P0CB65">
    <property type="interactions" value="1023"/>
</dbReference>
<dbReference type="STRING" id="7955.ENSDARP00000136286"/>
<dbReference type="InParanoid" id="P0CB65"/>
<dbReference type="PRO" id="PR:P0CB65"/>
<dbReference type="Proteomes" id="UP000000437">
    <property type="component" value="Unplaced"/>
</dbReference>
<dbReference type="GO" id="GO:0005634">
    <property type="term" value="C:nucleus"/>
    <property type="evidence" value="ECO:0000250"/>
    <property type="project" value="UniProtKB"/>
</dbReference>
<dbReference type="GO" id="GO:0003729">
    <property type="term" value="F:mRNA binding"/>
    <property type="evidence" value="ECO:0000250"/>
    <property type="project" value="UniProtKB"/>
</dbReference>
<dbReference type="GO" id="GO:0030154">
    <property type="term" value="P:cell differentiation"/>
    <property type="evidence" value="ECO:0000315"/>
    <property type="project" value="UniProtKB"/>
</dbReference>
<dbReference type="GO" id="GO:0006397">
    <property type="term" value="P:mRNA processing"/>
    <property type="evidence" value="ECO:0000315"/>
    <property type="project" value="UniProtKB"/>
</dbReference>
<dbReference type="GO" id="GO:0007399">
    <property type="term" value="P:nervous system development"/>
    <property type="evidence" value="ECO:0000315"/>
    <property type="project" value="UniProtKB"/>
</dbReference>
<dbReference type="GO" id="GO:0000381">
    <property type="term" value="P:regulation of alternative mRNA splicing, via spliceosome"/>
    <property type="evidence" value="ECO:0000250"/>
    <property type="project" value="UniProtKB"/>
</dbReference>
<dbReference type="GO" id="GO:0043484">
    <property type="term" value="P:regulation of RNA splicing"/>
    <property type="evidence" value="ECO:0000315"/>
    <property type="project" value="UniProtKB"/>
</dbReference>
<dbReference type="GO" id="GO:0008380">
    <property type="term" value="P:RNA splicing"/>
    <property type="evidence" value="ECO:0007669"/>
    <property type="project" value="UniProtKB-KW"/>
</dbReference>
<dbReference type="InterPro" id="IPR029360">
    <property type="entry name" value="SRRM_C"/>
</dbReference>
<dbReference type="InterPro" id="IPR052109">
    <property type="entry name" value="SRRM_Domain-Containing"/>
</dbReference>
<dbReference type="PANTHER" id="PTHR34755">
    <property type="entry name" value="SERINE/ARGININE REPETITIVE MATRIX PROTEIN 3-RELATED"/>
    <property type="match status" value="1"/>
</dbReference>
<dbReference type="PANTHER" id="PTHR34755:SF1">
    <property type="entry name" value="SERINE_ARGININE REPETITIVE MATRIX PROTEIN 4"/>
    <property type="match status" value="1"/>
</dbReference>
<dbReference type="Pfam" id="PF15230">
    <property type="entry name" value="SRRM_C"/>
    <property type="match status" value="1"/>
</dbReference>
<evidence type="ECO:0000250" key="1">
    <source>
        <dbReference type="UniProtKB" id="Q8BKA3"/>
    </source>
</evidence>
<evidence type="ECO:0000256" key="2">
    <source>
        <dbReference type="SAM" id="MobiDB-lite"/>
    </source>
</evidence>
<evidence type="ECO:0000269" key="3">
    <source>
    </source>
</evidence>
<evidence type="ECO:0000305" key="4"/>